<evidence type="ECO:0000255" key="1">
    <source>
        <dbReference type="HAMAP-Rule" id="MF_00104"/>
    </source>
</evidence>
<gene>
    <name evidence="1" type="primary">rnc</name>
    <name type="ordered locus">KPN78578_28410</name>
    <name type="ORF">KPN_02892</name>
</gene>
<proteinExistence type="inferred from homology"/>
<keyword id="KW-0963">Cytoplasm</keyword>
<keyword id="KW-0255">Endonuclease</keyword>
<keyword id="KW-0378">Hydrolase</keyword>
<keyword id="KW-0460">Magnesium</keyword>
<keyword id="KW-0479">Metal-binding</keyword>
<keyword id="KW-0507">mRNA processing</keyword>
<keyword id="KW-0540">Nuclease</keyword>
<keyword id="KW-0694">RNA-binding</keyword>
<keyword id="KW-0698">rRNA processing</keyword>
<keyword id="KW-0699">rRNA-binding</keyword>
<keyword id="KW-0819">tRNA processing</keyword>
<dbReference type="EC" id="3.1.26.3" evidence="1"/>
<dbReference type="EMBL" id="CP000647">
    <property type="protein sequence ID" value="ABR78302.1"/>
    <property type="molecule type" value="Genomic_DNA"/>
</dbReference>
<dbReference type="RefSeq" id="WP_002914065.1">
    <property type="nucleotide sequence ID" value="NC_009648.1"/>
</dbReference>
<dbReference type="SMR" id="A6TCI1"/>
<dbReference type="STRING" id="272620.KPN_02892"/>
<dbReference type="jPOST" id="A6TCI1"/>
<dbReference type="PaxDb" id="272620-KPN_02892"/>
<dbReference type="EnsemblBacteria" id="ABR78302">
    <property type="protein sequence ID" value="ABR78302"/>
    <property type="gene ID" value="KPN_02892"/>
</dbReference>
<dbReference type="GeneID" id="93271845"/>
<dbReference type="KEGG" id="kpn:KPN_02892"/>
<dbReference type="HOGENOM" id="CLU_000907_1_1_6"/>
<dbReference type="Proteomes" id="UP000000265">
    <property type="component" value="Chromosome"/>
</dbReference>
<dbReference type="GO" id="GO:0005737">
    <property type="term" value="C:cytoplasm"/>
    <property type="evidence" value="ECO:0007669"/>
    <property type="project" value="UniProtKB-SubCell"/>
</dbReference>
<dbReference type="GO" id="GO:0003725">
    <property type="term" value="F:double-stranded RNA binding"/>
    <property type="evidence" value="ECO:0007669"/>
    <property type="project" value="TreeGrafter"/>
</dbReference>
<dbReference type="GO" id="GO:0046872">
    <property type="term" value="F:metal ion binding"/>
    <property type="evidence" value="ECO:0007669"/>
    <property type="project" value="UniProtKB-KW"/>
</dbReference>
<dbReference type="GO" id="GO:0004525">
    <property type="term" value="F:ribonuclease III activity"/>
    <property type="evidence" value="ECO:0007669"/>
    <property type="project" value="UniProtKB-UniRule"/>
</dbReference>
<dbReference type="GO" id="GO:0019843">
    <property type="term" value="F:rRNA binding"/>
    <property type="evidence" value="ECO:0007669"/>
    <property type="project" value="UniProtKB-KW"/>
</dbReference>
<dbReference type="GO" id="GO:0006397">
    <property type="term" value="P:mRNA processing"/>
    <property type="evidence" value="ECO:0007669"/>
    <property type="project" value="UniProtKB-UniRule"/>
</dbReference>
<dbReference type="GO" id="GO:0010468">
    <property type="term" value="P:regulation of gene expression"/>
    <property type="evidence" value="ECO:0007669"/>
    <property type="project" value="TreeGrafter"/>
</dbReference>
<dbReference type="GO" id="GO:0006364">
    <property type="term" value="P:rRNA processing"/>
    <property type="evidence" value="ECO:0007669"/>
    <property type="project" value="UniProtKB-UniRule"/>
</dbReference>
<dbReference type="GO" id="GO:0008033">
    <property type="term" value="P:tRNA processing"/>
    <property type="evidence" value="ECO:0007669"/>
    <property type="project" value="UniProtKB-KW"/>
</dbReference>
<dbReference type="CDD" id="cd10845">
    <property type="entry name" value="DSRM_RNAse_III_family"/>
    <property type="match status" value="1"/>
</dbReference>
<dbReference type="CDD" id="cd00593">
    <property type="entry name" value="RIBOc"/>
    <property type="match status" value="1"/>
</dbReference>
<dbReference type="FunFam" id="1.10.1520.10:FF:000001">
    <property type="entry name" value="Ribonuclease 3"/>
    <property type="match status" value="1"/>
</dbReference>
<dbReference type="FunFam" id="3.30.160.20:FF:000003">
    <property type="entry name" value="Ribonuclease 3"/>
    <property type="match status" value="1"/>
</dbReference>
<dbReference type="Gene3D" id="3.30.160.20">
    <property type="match status" value="1"/>
</dbReference>
<dbReference type="Gene3D" id="1.10.1520.10">
    <property type="entry name" value="Ribonuclease III domain"/>
    <property type="match status" value="1"/>
</dbReference>
<dbReference type="HAMAP" id="MF_00104">
    <property type="entry name" value="RNase_III"/>
    <property type="match status" value="1"/>
</dbReference>
<dbReference type="InterPro" id="IPR014720">
    <property type="entry name" value="dsRBD_dom"/>
</dbReference>
<dbReference type="InterPro" id="IPR011907">
    <property type="entry name" value="RNase_III"/>
</dbReference>
<dbReference type="InterPro" id="IPR000999">
    <property type="entry name" value="RNase_III_dom"/>
</dbReference>
<dbReference type="InterPro" id="IPR036389">
    <property type="entry name" value="RNase_III_sf"/>
</dbReference>
<dbReference type="NCBIfam" id="TIGR02191">
    <property type="entry name" value="RNaseIII"/>
    <property type="match status" value="1"/>
</dbReference>
<dbReference type="PANTHER" id="PTHR11207:SF0">
    <property type="entry name" value="RIBONUCLEASE 3"/>
    <property type="match status" value="1"/>
</dbReference>
<dbReference type="PANTHER" id="PTHR11207">
    <property type="entry name" value="RIBONUCLEASE III"/>
    <property type="match status" value="1"/>
</dbReference>
<dbReference type="Pfam" id="PF00035">
    <property type="entry name" value="dsrm"/>
    <property type="match status" value="1"/>
</dbReference>
<dbReference type="Pfam" id="PF14622">
    <property type="entry name" value="Ribonucleas_3_3"/>
    <property type="match status" value="1"/>
</dbReference>
<dbReference type="SMART" id="SM00358">
    <property type="entry name" value="DSRM"/>
    <property type="match status" value="1"/>
</dbReference>
<dbReference type="SMART" id="SM00535">
    <property type="entry name" value="RIBOc"/>
    <property type="match status" value="1"/>
</dbReference>
<dbReference type="SUPFAM" id="SSF54768">
    <property type="entry name" value="dsRNA-binding domain-like"/>
    <property type="match status" value="1"/>
</dbReference>
<dbReference type="SUPFAM" id="SSF69065">
    <property type="entry name" value="RNase III domain-like"/>
    <property type="match status" value="1"/>
</dbReference>
<dbReference type="PROSITE" id="PS50137">
    <property type="entry name" value="DS_RBD"/>
    <property type="match status" value="1"/>
</dbReference>
<dbReference type="PROSITE" id="PS00517">
    <property type="entry name" value="RNASE_3_1"/>
    <property type="match status" value="1"/>
</dbReference>
<dbReference type="PROSITE" id="PS50142">
    <property type="entry name" value="RNASE_3_2"/>
    <property type="match status" value="1"/>
</dbReference>
<comment type="function">
    <text evidence="1">Digests double-stranded RNA. Involved in the processing of primary rRNA transcript to yield the immediate precursors to the large and small rRNAs (23S and 16S). Processes some mRNAs, and tRNAs when they are encoded in the rRNA operon. Processes pre-crRNA and tracrRNA of type II CRISPR loci if present in the organism.</text>
</comment>
<comment type="catalytic activity">
    <reaction evidence="1">
        <text>Endonucleolytic cleavage to 5'-phosphomonoester.</text>
        <dbReference type="EC" id="3.1.26.3"/>
    </reaction>
</comment>
<comment type="cofactor">
    <cofactor evidence="1">
        <name>Mg(2+)</name>
        <dbReference type="ChEBI" id="CHEBI:18420"/>
    </cofactor>
</comment>
<comment type="subunit">
    <text evidence="1">Homodimer.</text>
</comment>
<comment type="subcellular location">
    <subcellularLocation>
        <location evidence="1">Cytoplasm</location>
    </subcellularLocation>
</comment>
<comment type="similarity">
    <text evidence="1">Belongs to the ribonuclease III family.</text>
</comment>
<protein>
    <recommendedName>
        <fullName evidence="1">Ribonuclease 3</fullName>
        <ecNumber evidence="1">3.1.26.3</ecNumber>
    </recommendedName>
    <alternativeName>
        <fullName evidence="1">Ribonuclease III</fullName>
        <shortName evidence="1">RNase III</shortName>
    </alternativeName>
</protein>
<feature type="chain" id="PRO_1000075767" description="Ribonuclease 3">
    <location>
        <begin position="1"/>
        <end position="226"/>
    </location>
</feature>
<feature type="domain" description="RNase III" evidence="1">
    <location>
        <begin position="6"/>
        <end position="128"/>
    </location>
</feature>
<feature type="domain" description="DRBM" evidence="1">
    <location>
        <begin position="155"/>
        <end position="225"/>
    </location>
</feature>
<feature type="active site" evidence="1">
    <location>
        <position position="45"/>
    </location>
</feature>
<feature type="active site" evidence="1">
    <location>
        <position position="117"/>
    </location>
</feature>
<feature type="binding site" evidence="1">
    <location>
        <position position="41"/>
    </location>
    <ligand>
        <name>Mg(2+)</name>
        <dbReference type="ChEBI" id="CHEBI:18420"/>
    </ligand>
</feature>
<feature type="binding site" evidence="1">
    <location>
        <position position="114"/>
    </location>
    <ligand>
        <name>Mg(2+)</name>
        <dbReference type="ChEBI" id="CHEBI:18420"/>
    </ligand>
</feature>
<feature type="binding site" evidence="1">
    <location>
        <position position="117"/>
    </location>
    <ligand>
        <name>Mg(2+)</name>
        <dbReference type="ChEBI" id="CHEBI:18420"/>
    </ligand>
</feature>
<organism>
    <name type="scientific">Klebsiella pneumoniae subsp. pneumoniae (strain ATCC 700721 / MGH 78578)</name>
    <dbReference type="NCBI Taxonomy" id="272620"/>
    <lineage>
        <taxon>Bacteria</taxon>
        <taxon>Pseudomonadati</taxon>
        <taxon>Pseudomonadota</taxon>
        <taxon>Gammaproteobacteria</taxon>
        <taxon>Enterobacterales</taxon>
        <taxon>Enterobacteriaceae</taxon>
        <taxon>Klebsiella/Raoultella group</taxon>
        <taxon>Klebsiella</taxon>
        <taxon>Klebsiella pneumoniae complex</taxon>
    </lineage>
</organism>
<name>RNC_KLEP7</name>
<sequence length="226" mass="25557">MNPIVINRLQRKLGYTFHHQELLQQALTHRSASSKHNERLEFLGDSILSFVIANALYHRFPRVDEGDMSRMRATLVRGNTLAEIAREFELGECLRLGPGELKSGGFRRESILADTVEALIGGVFLDSDIQNVERLILSWYQTRLDEISPGDKQKDPKTRLQEYLQGRHLPLPSYLVVQVRGEAHDQEFTIHCQVSGLSEPVVGTGSSRRKAEQAAAEQALKKLELE</sequence>
<accession>A6TCI1</accession>
<reference key="1">
    <citation type="submission" date="2006-09" db="EMBL/GenBank/DDBJ databases">
        <authorList>
            <consortium name="The Klebsiella pneumonia Genome Sequencing Project"/>
            <person name="McClelland M."/>
            <person name="Sanderson E.K."/>
            <person name="Spieth J."/>
            <person name="Clifton W.S."/>
            <person name="Latreille P."/>
            <person name="Sabo A."/>
            <person name="Pepin K."/>
            <person name="Bhonagiri V."/>
            <person name="Porwollik S."/>
            <person name="Ali J."/>
            <person name="Wilson R.K."/>
        </authorList>
    </citation>
    <scope>NUCLEOTIDE SEQUENCE [LARGE SCALE GENOMIC DNA]</scope>
    <source>
        <strain>ATCC 700721 / MGH 78578</strain>
    </source>
</reference>